<dbReference type="EC" id="5.1.3.2"/>
<dbReference type="EMBL" id="CP000848">
    <property type="protein sequence ID" value="ABV76064.1"/>
    <property type="molecule type" value="Genomic_DNA"/>
</dbReference>
<dbReference type="RefSeq" id="WP_012150660.1">
    <property type="nucleotide sequence ID" value="NC_009882.1"/>
</dbReference>
<dbReference type="SMR" id="A8GRN9"/>
<dbReference type="GeneID" id="79937220"/>
<dbReference type="KEGG" id="rri:A1G_02595"/>
<dbReference type="HOGENOM" id="CLU_013560_4_1_5"/>
<dbReference type="Proteomes" id="UP000006832">
    <property type="component" value="Chromosome"/>
</dbReference>
<dbReference type="GO" id="GO:0003978">
    <property type="term" value="F:UDP-glucose 4-epimerase activity"/>
    <property type="evidence" value="ECO:0007669"/>
    <property type="project" value="UniProtKB-EC"/>
</dbReference>
<dbReference type="GO" id="GO:0009103">
    <property type="term" value="P:lipopolysaccharide biosynthetic process"/>
    <property type="evidence" value="ECO:0007669"/>
    <property type="project" value="UniProtKB-KW"/>
</dbReference>
<dbReference type="CDD" id="cd05237">
    <property type="entry name" value="UDP_invert_4-6DH_SDR_e"/>
    <property type="match status" value="1"/>
</dbReference>
<dbReference type="Gene3D" id="3.40.50.720">
    <property type="entry name" value="NAD(P)-binding Rossmann-like Domain"/>
    <property type="match status" value="1"/>
</dbReference>
<dbReference type="InterPro" id="IPR013692">
    <property type="entry name" value="CapD_C"/>
</dbReference>
<dbReference type="InterPro" id="IPR036291">
    <property type="entry name" value="NAD(P)-bd_dom_sf"/>
</dbReference>
<dbReference type="InterPro" id="IPR003869">
    <property type="entry name" value="Polysac_CapD-like"/>
</dbReference>
<dbReference type="InterPro" id="IPR051203">
    <property type="entry name" value="Polysaccharide_Synthase-Rel"/>
</dbReference>
<dbReference type="PANTHER" id="PTHR43318">
    <property type="entry name" value="UDP-N-ACETYLGLUCOSAMINE 4,6-DEHYDRATASE"/>
    <property type="match status" value="1"/>
</dbReference>
<dbReference type="PANTHER" id="PTHR43318:SF2">
    <property type="entry name" value="UDP-N-ACETYLGLUCOSAMINE 4,6-DEHYDRATASE (INVERTING)"/>
    <property type="match status" value="1"/>
</dbReference>
<dbReference type="Pfam" id="PF08485">
    <property type="entry name" value="Polysacc_syn_2C"/>
    <property type="match status" value="1"/>
</dbReference>
<dbReference type="Pfam" id="PF02719">
    <property type="entry name" value="Polysacc_synt_2"/>
    <property type="match status" value="1"/>
</dbReference>
<dbReference type="SUPFAM" id="SSF51735">
    <property type="entry name" value="NAD(P)-binding Rossmann-fold domains"/>
    <property type="match status" value="1"/>
</dbReference>
<feature type="chain" id="PRO_0000314607" description="UDP-glucose 4-epimerase">
    <location>
        <begin position="1"/>
        <end position="341"/>
    </location>
</feature>
<sequence>MFVDKTLMITGGTGSFGNAVLSRFLKSGIINDIKEIRIFSRDEKKQEDMRIALNNPKLKFYIGDVRNYKSIDEAMHGVNYVFHAAALKQVPTCEFYPMEAINTNVLGTENVLSAAINNKVTKVIVLSTDKAVYPINAMGLSKALMEKLAIAKARMRSSGETVLCVTRYGNVMASRGSVIPLFINQIKQGKELTITEPSMTRFLMSLVDSVDLVLYAFEHGNQGDIFVQKSPASTIEVLAKALQDIFNSKNEIRFIGTRHGEKHYESLVSSEEMAKADDLRDYYRIPMDGRDLNYAKYFVEGEKKVALLEDYTSHNTKRLNLEEVKELLLTLDYVQEELKNA</sequence>
<gene>
    <name type="primary">capD</name>
    <name type="ordered locus">A1G_02595</name>
</gene>
<proteinExistence type="inferred from homology"/>
<accession>A8GRN9</accession>
<evidence type="ECO:0000250" key="1"/>
<evidence type="ECO:0000305" key="2"/>
<keyword id="KW-0413">Isomerase</keyword>
<keyword id="KW-0448">Lipopolysaccharide biosynthesis</keyword>
<comment type="function">
    <text evidence="1">Epimerizes UDP-galactose to UDP-glucose.</text>
</comment>
<comment type="catalytic activity">
    <reaction>
        <text>UDP-alpha-D-glucose = UDP-alpha-D-galactose</text>
        <dbReference type="Rhea" id="RHEA:22168"/>
        <dbReference type="ChEBI" id="CHEBI:58885"/>
        <dbReference type="ChEBI" id="CHEBI:66914"/>
        <dbReference type="EC" id="5.1.3.2"/>
    </reaction>
</comment>
<comment type="similarity">
    <text evidence="2">Belongs to the polysaccharide synthase family.</text>
</comment>
<organism>
    <name type="scientific">Rickettsia rickettsii (strain Sheila Smith)</name>
    <dbReference type="NCBI Taxonomy" id="392021"/>
    <lineage>
        <taxon>Bacteria</taxon>
        <taxon>Pseudomonadati</taxon>
        <taxon>Pseudomonadota</taxon>
        <taxon>Alphaproteobacteria</taxon>
        <taxon>Rickettsiales</taxon>
        <taxon>Rickettsiaceae</taxon>
        <taxon>Rickettsieae</taxon>
        <taxon>Rickettsia</taxon>
        <taxon>spotted fever group</taxon>
    </lineage>
</organism>
<protein>
    <recommendedName>
        <fullName>UDP-glucose 4-epimerase</fullName>
        <ecNumber>5.1.3.2</ecNumber>
    </recommendedName>
    <alternativeName>
        <fullName>Galactowaldenase</fullName>
    </alternativeName>
    <alternativeName>
        <fullName>UDP-galactose 4-epimerase</fullName>
    </alternativeName>
</protein>
<name>CAPD_RICRS</name>
<reference key="1">
    <citation type="submission" date="2007-09" db="EMBL/GenBank/DDBJ databases">
        <title>Complete genome sequence of Rickettsia rickettsii.</title>
        <authorList>
            <person name="Madan A."/>
            <person name="Fahey J."/>
            <person name="Helton E."/>
            <person name="Ketteman M."/>
            <person name="Madan A."/>
            <person name="Rodrigues S."/>
            <person name="Sanchez A."/>
            <person name="Dasch G."/>
            <person name="Eremeeva M."/>
        </authorList>
    </citation>
    <scope>NUCLEOTIDE SEQUENCE [LARGE SCALE GENOMIC DNA]</scope>
    <source>
        <strain>Sheila Smith</strain>
    </source>
</reference>